<organism>
    <name type="scientific">Halalkalibacterium halodurans (strain ATCC BAA-125 / DSM 18197 / FERM 7344 / JCM 9153 / C-125)</name>
    <name type="common">Bacillus halodurans</name>
    <dbReference type="NCBI Taxonomy" id="272558"/>
    <lineage>
        <taxon>Bacteria</taxon>
        <taxon>Bacillati</taxon>
        <taxon>Bacillota</taxon>
        <taxon>Bacilli</taxon>
        <taxon>Bacillales</taxon>
        <taxon>Bacillaceae</taxon>
        <taxon>Halalkalibacterium (ex Joshi et al. 2022)</taxon>
    </lineage>
</organism>
<dbReference type="EMBL" id="AB017508">
    <property type="protein sequence ID" value="BAA75282.1"/>
    <property type="molecule type" value="Genomic_DNA"/>
</dbReference>
<dbReference type="EMBL" id="BA000004">
    <property type="protein sequence ID" value="BAB03864.1"/>
    <property type="molecule type" value="Genomic_DNA"/>
</dbReference>
<dbReference type="PIR" id="T44394">
    <property type="entry name" value="T44394"/>
</dbReference>
<dbReference type="RefSeq" id="WP_010896328.1">
    <property type="nucleotide sequence ID" value="NC_002570.2"/>
</dbReference>
<dbReference type="SMR" id="Q9Z9K3"/>
<dbReference type="STRING" id="272558.gene:10725985"/>
<dbReference type="GeneID" id="87595686"/>
<dbReference type="KEGG" id="bha:BH0145"/>
<dbReference type="eggNOG" id="COG0198">
    <property type="taxonomic scope" value="Bacteria"/>
</dbReference>
<dbReference type="HOGENOM" id="CLU_093315_2_0_9"/>
<dbReference type="OrthoDB" id="9807419at2"/>
<dbReference type="Proteomes" id="UP000001258">
    <property type="component" value="Chromosome"/>
</dbReference>
<dbReference type="GO" id="GO:1990904">
    <property type="term" value="C:ribonucleoprotein complex"/>
    <property type="evidence" value="ECO:0007669"/>
    <property type="project" value="UniProtKB-KW"/>
</dbReference>
<dbReference type="GO" id="GO:0005840">
    <property type="term" value="C:ribosome"/>
    <property type="evidence" value="ECO:0007669"/>
    <property type="project" value="UniProtKB-KW"/>
</dbReference>
<dbReference type="GO" id="GO:0019843">
    <property type="term" value="F:rRNA binding"/>
    <property type="evidence" value="ECO:0007669"/>
    <property type="project" value="UniProtKB-UniRule"/>
</dbReference>
<dbReference type="GO" id="GO:0003735">
    <property type="term" value="F:structural constituent of ribosome"/>
    <property type="evidence" value="ECO:0007669"/>
    <property type="project" value="InterPro"/>
</dbReference>
<dbReference type="GO" id="GO:0006412">
    <property type="term" value="P:translation"/>
    <property type="evidence" value="ECO:0007669"/>
    <property type="project" value="UniProtKB-UniRule"/>
</dbReference>
<dbReference type="CDD" id="cd06089">
    <property type="entry name" value="KOW_RPL26"/>
    <property type="match status" value="1"/>
</dbReference>
<dbReference type="FunFam" id="2.30.30.30:FF:000004">
    <property type="entry name" value="50S ribosomal protein L24"/>
    <property type="match status" value="1"/>
</dbReference>
<dbReference type="Gene3D" id="2.30.30.30">
    <property type="match status" value="1"/>
</dbReference>
<dbReference type="HAMAP" id="MF_01326_B">
    <property type="entry name" value="Ribosomal_uL24_B"/>
    <property type="match status" value="1"/>
</dbReference>
<dbReference type="InterPro" id="IPR005824">
    <property type="entry name" value="KOW"/>
</dbReference>
<dbReference type="InterPro" id="IPR014722">
    <property type="entry name" value="Rib_uL2_dom2"/>
</dbReference>
<dbReference type="InterPro" id="IPR003256">
    <property type="entry name" value="Ribosomal_uL24"/>
</dbReference>
<dbReference type="InterPro" id="IPR005825">
    <property type="entry name" value="Ribosomal_uL24_CS"/>
</dbReference>
<dbReference type="InterPro" id="IPR041988">
    <property type="entry name" value="Ribosomal_uL24_KOW"/>
</dbReference>
<dbReference type="InterPro" id="IPR008991">
    <property type="entry name" value="Translation_prot_SH3-like_sf"/>
</dbReference>
<dbReference type="NCBIfam" id="TIGR01079">
    <property type="entry name" value="rplX_bact"/>
    <property type="match status" value="1"/>
</dbReference>
<dbReference type="PANTHER" id="PTHR12903">
    <property type="entry name" value="MITOCHONDRIAL RIBOSOMAL PROTEIN L24"/>
    <property type="match status" value="1"/>
</dbReference>
<dbReference type="Pfam" id="PF00467">
    <property type="entry name" value="KOW"/>
    <property type="match status" value="1"/>
</dbReference>
<dbReference type="Pfam" id="PF17136">
    <property type="entry name" value="ribosomal_L24"/>
    <property type="match status" value="1"/>
</dbReference>
<dbReference type="SMART" id="SM00739">
    <property type="entry name" value="KOW"/>
    <property type="match status" value="1"/>
</dbReference>
<dbReference type="SUPFAM" id="SSF50104">
    <property type="entry name" value="Translation proteins SH3-like domain"/>
    <property type="match status" value="1"/>
</dbReference>
<dbReference type="PROSITE" id="PS01108">
    <property type="entry name" value="RIBOSOMAL_L24"/>
    <property type="match status" value="1"/>
</dbReference>
<keyword id="KW-1185">Reference proteome</keyword>
<keyword id="KW-0687">Ribonucleoprotein</keyword>
<keyword id="KW-0689">Ribosomal protein</keyword>
<keyword id="KW-0694">RNA-binding</keyword>
<keyword id="KW-0699">rRNA-binding</keyword>
<feature type="chain" id="PRO_0000130621" description="Large ribosomal subunit protein uL24">
    <location>
        <begin position="1"/>
        <end position="103"/>
    </location>
</feature>
<reference key="1">
    <citation type="journal article" date="1999" name="Biosci. Biotechnol. Biochem.">
        <title>Sequence analysis of a 32-kb region including the major ribosomal protein gene clusters from alkaliphilic Bacillus sp. strain C-125.</title>
        <authorList>
            <person name="Takami H."/>
            <person name="Takaki Y."/>
            <person name="Nakasone K."/>
            <person name="Hirama C."/>
            <person name="Inoue A."/>
            <person name="Horikoshi K."/>
        </authorList>
    </citation>
    <scope>NUCLEOTIDE SEQUENCE [GENOMIC DNA]</scope>
    <source>
        <strain>ATCC BAA-125 / DSM 18197 / FERM 7344 / JCM 9153 / C-125</strain>
    </source>
</reference>
<reference key="2">
    <citation type="journal article" date="2000" name="Nucleic Acids Res.">
        <title>Complete genome sequence of the alkaliphilic bacterium Bacillus halodurans and genomic sequence comparison with Bacillus subtilis.</title>
        <authorList>
            <person name="Takami H."/>
            <person name="Nakasone K."/>
            <person name="Takaki Y."/>
            <person name="Maeno G."/>
            <person name="Sasaki R."/>
            <person name="Masui N."/>
            <person name="Fuji F."/>
            <person name="Hirama C."/>
            <person name="Nakamura Y."/>
            <person name="Ogasawara N."/>
            <person name="Kuhara S."/>
            <person name="Horikoshi K."/>
        </authorList>
    </citation>
    <scope>NUCLEOTIDE SEQUENCE [LARGE SCALE GENOMIC DNA]</scope>
    <source>
        <strain>ATCC BAA-125 / DSM 18197 / FERM 7344 / JCM 9153 / C-125</strain>
    </source>
</reference>
<accession>Q9Z9K3</accession>
<accession>Q9JPX6</accession>
<sequence>MHVKKGDTVKVISGKDKGKQGVILEAYPKKDRVLVEGVNIVKKHAKPSQENPQGGILNMEAPIHVSNVLPIDPKTGEPTRVGYKVENGKKVRIAKKSGEVLDK</sequence>
<gene>
    <name evidence="1" type="primary">rplX</name>
    <name type="ordered locus">BH0145</name>
</gene>
<protein>
    <recommendedName>
        <fullName evidence="1">Large ribosomal subunit protein uL24</fullName>
    </recommendedName>
    <alternativeName>
        <fullName evidence="2">50S ribosomal protein L24</fullName>
    </alternativeName>
</protein>
<name>RL24_HALH5</name>
<proteinExistence type="inferred from homology"/>
<evidence type="ECO:0000255" key="1">
    <source>
        <dbReference type="HAMAP-Rule" id="MF_01326"/>
    </source>
</evidence>
<evidence type="ECO:0000305" key="2"/>
<comment type="function">
    <text evidence="1">One of two assembly initiator proteins, it binds directly to the 5'-end of the 23S rRNA, where it nucleates assembly of the 50S subunit.</text>
</comment>
<comment type="function">
    <text evidence="1">One of the proteins that surrounds the polypeptide exit tunnel on the outside of the subunit.</text>
</comment>
<comment type="subunit">
    <text evidence="1">Part of the 50S ribosomal subunit.</text>
</comment>
<comment type="similarity">
    <text evidence="1">Belongs to the universal ribosomal protein uL24 family.</text>
</comment>